<proteinExistence type="inferred from homology"/>
<organism>
    <name type="scientific">Clostridium perfringens (strain SM101 / Type A)</name>
    <dbReference type="NCBI Taxonomy" id="289380"/>
    <lineage>
        <taxon>Bacteria</taxon>
        <taxon>Bacillati</taxon>
        <taxon>Bacillota</taxon>
        <taxon>Clostridia</taxon>
        <taxon>Eubacteriales</taxon>
        <taxon>Clostridiaceae</taxon>
        <taxon>Clostridium</taxon>
    </lineage>
</organism>
<gene>
    <name evidence="1" type="primary">rplC</name>
    <name type="ordered locus">CPR_2399</name>
</gene>
<feature type="chain" id="PRO_1000052037" description="Large ribosomal subunit protein uL3">
    <location>
        <begin position="1"/>
        <end position="209"/>
    </location>
</feature>
<feature type="region of interest" description="Disordered" evidence="2">
    <location>
        <begin position="127"/>
        <end position="153"/>
    </location>
</feature>
<accession>Q0SQE4</accession>
<comment type="function">
    <text evidence="1">One of the primary rRNA binding proteins, it binds directly near the 3'-end of the 23S rRNA, where it nucleates assembly of the 50S subunit.</text>
</comment>
<comment type="subunit">
    <text evidence="1">Part of the 50S ribosomal subunit. Forms a cluster with proteins L14 and L19.</text>
</comment>
<comment type="similarity">
    <text evidence="1">Belongs to the universal ribosomal protein uL3 family.</text>
</comment>
<sequence>MKKAIIGKKVGMTQIFDENGRVIPVTVVEAGPCVVVQKKTVETDGYDAIQVGFGELREKLVNKPRRGHFAKAGVSLRRTLKEFRMEDVANYNVGDEIKVDTFEIGDKVDVSGVSKGKGFQGTIKRWNASRGPMSHGSKFHRAPGSMGAASDPSRTFKNKRMPGHMGAKNTTVLNLEVVKIMPEKNIILIKGGIPGPNKGTIVIRNSVKA</sequence>
<name>RL3_CLOPS</name>
<reference key="1">
    <citation type="journal article" date="2006" name="Genome Res.">
        <title>Skewed genomic variability in strains of the toxigenic bacterial pathogen, Clostridium perfringens.</title>
        <authorList>
            <person name="Myers G.S.A."/>
            <person name="Rasko D.A."/>
            <person name="Cheung J.K."/>
            <person name="Ravel J."/>
            <person name="Seshadri R."/>
            <person name="DeBoy R.T."/>
            <person name="Ren Q."/>
            <person name="Varga J."/>
            <person name="Awad M.M."/>
            <person name="Brinkac L.M."/>
            <person name="Daugherty S.C."/>
            <person name="Haft D.H."/>
            <person name="Dodson R.J."/>
            <person name="Madupu R."/>
            <person name="Nelson W.C."/>
            <person name="Rosovitz M.J."/>
            <person name="Sullivan S.A."/>
            <person name="Khouri H."/>
            <person name="Dimitrov G.I."/>
            <person name="Watkins K.L."/>
            <person name="Mulligan S."/>
            <person name="Benton J."/>
            <person name="Radune D."/>
            <person name="Fisher D.J."/>
            <person name="Atkins H.S."/>
            <person name="Hiscox T."/>
            <person name="Jost B.H."/>
            <person name="Billington S.J."/>
            <person name="Songer J.G."/>
            <person name="McClane B.A."/>
            <person name="Titball R.W."/>
            <person name="Rood J.I."/>
            <person name="Melville S.B."/>
            <person name="Paulsen I.T."/>
        </authorList>
    </citation>
    <scope>NUCLEOTIDE SEQUENCE [LARGE SCALE GENOMIC DNA]</scope>
    <source>
        <strain>SM101 / Type A</strain>
    </source>
</reference>
<keyword id="KW-0687">Ribonucleoprotein</keyword>
<keyword id="KW-0689">Ribosomal protein</keyword>
<keyword id="KW-0694">RNA-binding</keyword>
<keyword id="KW-0699">rRNA-binding</keyword>
<evidence type="ECO:0000255" key="1">
    <source>
        <dbReference type="HAMAP-Rule" id="MF_01325"/>
    </source>
</evidence>
<evidence type="ECO:0000256" key="2">
    <source>
        <dbReference type="SAM" id="MobiDB-lite"/>
    </source>
</evidence>
<evidence type="ECO:0000305" key="3"/>
<protein>
    <recommendedName>
        <fullName evidence="1">Large ribosomal subunit protein uL3</fullName>
    </recommendedName>
    <alternativeName>
        <fullName evidence="3">50S ribosomal protein L3</fullName>
    </alternativeName>
</protein>
<dbReference type="EMBL" id="CP000312">
    <property type="protein sequence ID" value="ABG86708.1"/>
    <property type="molecule type" value="Genomic_DNA"/>
</dbReference>
<dbReference type="RefSeq" id="WP_011593137.1">
    <property type="nucleotide sequence ID" value="NC_008262.1"/>
</dbReference>
<dbReference type="SMR" id="Q0SQE4"/>
<dbReference type="KEGG" id="cpr:CPR_2399"/>
<dbReference type="Proteomes" id="UP000001824">
    <property type="component" value="Chromosome"/>
</dbReference>
<dbReference type="GO" id="GO:0022625">
    <property type="term" value="C:cytosolic large ribosomal subunit"/>
    <property type="evidence" value="ECO:0007669"/>
    <property type="project" value="TreeGrafter"/>
</dbReference>
<dbReference type="GO" id="GO:0019843">
    <property type="term" value="F:rRNA binding"/>
    <property type="evidence" value="ECO:0007669"/>
    <property type="project" value="UniProtKB-UniRule"/>
</dbReference>
<dbReference type="GO" id="GO:0003735">
    <property type="term" value="F:structural constituent of ribosome"/>
    <property type="evidence" value="ECO:0007669"/>
    <property type="project" value="InterPro"/>
</dbReference>
<dbReference type="GO" id="GO:0006412">
    <property type="term" value="P:translation"/>
    <property type="evidence" value="ECO:0007669"/>
    <property type="project" value="UniProtKB-UniRule"/>
</dbReference>
<dbReference type="FunFam" id="2.40.30.10:FF:000004">
    <property type="entry name" value="50S ribosomal protein L3"/>
    <property type="match status" value="1"/>
</dbReference>
<dbReference type="FunFam" id="3.30.160.810:FF:000001">
    <property type="entry name" value="50S ribosomal protein L3"/>
    <property type="match status" value="1"/>
</dbReference>
<dbReference type="Gene3D" id="3.30.160.810">
    <property type="match status" value="1"/>
</dbReference>
<dbReference type="Gene3D" id="2.40.30.10">
    <property type="entry name" value="Translation factors"/>
    <property type="match status" value="1"/>
</dbReference>
<dbReference type="HAMAP" id="MF_01325_B">
    <property type="entry name" value="Ribosomal_uL3_B"/>
    <property type="match status" value="1"/>
</dbReference>
<dbReference type="InterPro" id="IPR000597">
    <property type="entry name" value="Ribosomal_uL3"/>
</dbReference>
<dbReference type="InterPro" id="IPR019927">
    <property type="entry name" value="Ribosomal_uL3_bac/org-type"/>
</dbReference>
<dbReference type="InterPro" id="IPR019926">
    <property type="entry name" value="Ribosomal_uL3_CS"/>
</dbReference>
<dbReference type="InterPro" id="IPR009000">
    <property type="entry name" value="Transl_B-barrel_sf"/>
</dbReference>
<dbReference type="NCBIfam" id="TIGR03625">
    <property type="entry name" value="L3_bact"/>
    <property type="match status" value="1"/>
</dbReference>
<dbReference type="PANTHER" id="PTHR11229">
    <property type="entry name" value="50S RIBOSOMAL PROTEIN L3"/>
    <property type="match status" value="1"/>
</dbReference>
<dbReference type="PANTHER" id="PTHR11229:SF16">
    <property type="entry name" value="LARGE RIBOSOMAL SUBUNIT PROTEIN UL3C"/>
    <property type="match status" value="1"/>
</dbReference>
<dbReference type="Pfam" id="PF00297">
    <property type="entry name" value="Ribosomal_L3"/>
    <property type="match status" value="1"/>
</dbReference>
<dbReference type="SUPFAM" id="SSF50447">
    <property type="entry name" value="Translation proteins"/>
    <property type="match status" value="1"/>
</dbReference>
<dbReference type="PROSITE" id="PS00474">
    <property type="entry name" value="RIBOSOMAL_L3"/>
    <property type="match status" value="1"/>
</dbReference>